<keyword id="KW-0067">ATP-binding</keyword>
<keyword id="KW-0418">Kinase</keyword>
<keyword id="KW-0460">Magnesium</keyword>
<keyword id="KW-0479">Metal-binding</keyword>
<keyword id="KW-0547">Nucleotide-binding</keyword>
<keyword id="KW-1185">Reference proteome</keyword>
<keyword id="KW-0808">Transferase</keyword>
<keyword id="KW-0862">Zinc</keyword>
<protein>
    <recommendedName>
        <fullName evidence="1">Pyridoxine/pyridoxal/pyridoxamine kinase</fullName>
        <shortName evidence="1">PN/PL/PM kinase</shortName>
        <ecNumber evidence="1">2.7.1.35</ecNumber>
    </recommendedName>
    <alternativeName>
        <fullName evidence="1">B6-vitamer kinase</fullName>
    </alternativeName>
</protein>
<organism>
    <name type="scientific">Bordetella pertussis (strain Tohama I / ATCC BAA-589 / NCTC 13251)</name>
    <dbReference type="NCBI Taxonomy" id="257313"/>
    <lineage>
        <taxon>Bacteria</taxon>
        <taxon>Pseudomonadati</taxon>
        <taxon>Pseudomonadota</taxon>
        <taxon>Betaproteobacteria</taxon>
        <taxon>Burkholderiales</taxon>
        <taxon>Alcaligenaceae</taxon>
        <taxon>Bordetella</taxon>
    </lineage>
</organism>
<sequence length="283" mass="29443">MKLAAPNPQALAPLPIDVVSIQSQVVYGQVGNSVAVPVFNGFGLRVAAVPTVVLSNTPHYPSMHGGAVPLDWFEGYLADLGARGALAGVRVVQLGYLGGPAQAEALGRWIAGLVAERPDLRVHIDPVIGDHDSGVYVAPGMVAAYRDHLLSLAQGLTPNGFELECLTGLPTGTMEQTIAAARTLLGGRARWVIVTSAAPATWPPGRVRVAVVTHDDAQVLEHAHVDTAPKGTGDMFGAALTGHRLAGQPVAEAARRAALQVIEALERTREAGCGELLLAGPLR</sequence>
<accession>Q7VYK4</accession>
<reference key="1">
    <citation type="journal article" date="2003" name="Nat. Genet.">
        <title>Comparative analysis of the genome sequences of Bordetella pertussis, Bordetella parapertussis and Bordetella bronchiseptica.</title>
        <authorList>
            <person name="Parkhill J."/>
            <person name="Sebaihia M."/>
            <person name="Preston A."/>
            <person name="Murphy L.D."/>
            <person name="Thomson N.R."/>
            <person name="Harris D.E."/>
            <person name="Holden M.T.G."/>
            <person name="Churcher C.M."/>
            <person name="Bentley S.D."/>
            <person name="Mungall K.L."/>
            <person name="Cerdeno-Tarraga A.-M."/>
            <person name="Temple L."/>
            <person name="James K.D."/>
            <person name="Harris B."/>
            <person name="Quail M.A."/>
            <person name="Achtman M."/>
            <person name="Atkin R."/>
            <person name="Baker S."/>
            <person name="Basham D."/>
            <person name="Bason N."/>
            <person name="Cherevach I."/>
            <person name="Chillingworth T."/>
            <person name="Collins M."/>
            <person name="Cronin A."/>
            <person name="Davis P."/>
            <person name="Doggett J."/>
            <person name="Feltwell T."/>
            <person name="Goble A."/>
            <person name="Hamlin N."/>
            <person name="Hauser H."/>
            <person name="Holroyd S."/>
            <person name="Jagels K."/>
            <person name="Leather S."/>
            <person name="Moule S."/>
            <person name="Norberczak H."/>
            <person name="O'Neil S."/>
            <person name="Ormond D."/>
            <person name="Price C."/>
            <person name="Rabbinowitsch E."/>
            <person name="Rutter S."/>
            <person name="Sanders M."/>
            <person name="Saunders D."/>
            <person name="Seeger K."/>
            <person name="Sharp S."/>
            <person name="Simmonds M."/>
            <person name="Skelton J."/>
            <person name="Squares R."/>
            <person name="Squares S."/>
            <person name="Stevens K."/>
            <person name="Unwin L."/>
            <person name="Whitehead S."/>
            <person name="Barrell B.G."/>
            <person name="Maskell D.J."/>
        </authorList>
    </citation>
    <scope>NUCLEOTIDE SEQUENCE [LARGE SCALE GENOMIC DNA]</scope>
    <source>
        <strain>Tohama I / ATCC BAA-589 / NCTC 13251</strain>
    </source>
</reference>
<evidence type="ECO:0000255" key="1">
    <source>
        <dbReference type="HAMAP-Rule" id="MF_01638"/>
    </source>
</evidence>
<evidence type="ECO:0000305" key="2"/>
<gene>
    <name evidence="1" type="primary">pdxK</name>
    <name type="ordered locus">BP1321</name>
</gene>
<dbReference type="EC" id="2.7.1.35" evidence="1"/>
<dbReference type="EMBL" id="BX640414">
    <property type="protein sequence ID" value="CAE41615.1"/>
    <property type="status" value="ALT_INIT"/>
    <property type="molecule type" value="Genomic_DNA"/>
</dbReference>
<dbReference type="RefSeq" id="NP_880082.1">
    <property type="nucleotide sequence ID" value="NC_002929.2"/>
</dbReference>
<dbReference type="SMR" id="Q7VYK4"/>
<dbReference type="STRING" id="257313.BP1321"/>
<dbReference type="PaxDb" id="257313-BP1321"/>
<dbReference type="KEGG" id="bpe:BP1321"/>
<dbReference type="PATRIC" id="fig|257313.5.peg.1421"/>
<dbReference type="eggNOG" id="COG2240">
    <property type="taxonomic scope" value="Bacteria"/>
</dbReference>
<dbReference type="HOGENOM" id="CLU_046496_3_1_4"/>
<dbReference type="UniPathway" id="UPA01068">
    <property type="reaction ID" value="UER00298"/>
</dbReference>
<dbReference type="UniPathway" id="UPA01068">
    <property type="reaction ID" value="UER00299"/>
</dbReference>
<dbReference type="UniPathway" id="UPA01068">
    <property type="reaction ID" value="UER00300"/>
</dbReference>
<dbReference type="Proteomes" id="UP000002676">
    <property type="component" value="Chromosome"/>
</dbReference>
<dbReference type="GO" id="GO:0005829">
    <property type="term" value="C:cytosol"/>
    <property type="evidence" value="ECO:0007669"/>
    <property type="project" value="TreeGrafter"/>
</dbReference>
<dbReference type="GO" id="GO:0005524">
    <property type="term" value="F:ATP binding"/>
    <property type="evidence" value="ECO:0007669"/>
    <property type="project" value="UniProtKB-UniRule"/>
</dbReference>
<dbReference type="GO" id="GO:0008902">
    <property type="term" value="F:hydroxymethylpyrimidine kinase activity"/>
    <property type="evidence" value="ECO:0007669"/>
    <property type="project" value="TreeGrafter"/>
</dbReference>
<dbReference type="GO" id="GO:0000287">
    <property type="term" value="F:magnesium ion binding"/>
    <property type="evidence" value="ECO:0007669"/>
    <property type="project" value="UniProtKB-UniRule"/>
</dbReference>
<dbReference type="GO" id="GO:0008478">
    <property type="term" value="F:pyridoxal kinase activity"/>
    <property type="evidence" value="ECO:0007669"/>
    <property type="project" value="UniProtKB-UniRule"/>
</dbReference>
<dbReference type="GO" id="GO:0008270">
    <property type="term" value="F:zinc ion binding"/>
    <property type="evidence" value="ECO:0007669"/>
    <property type="project" value="UniProtKB-UniRule"/>
</dbReference>
<dbReference type="GO" id="GO:0009443">
    <property type="term" value="P:pyridoxal 5'-phosphate salvage"/>
    <property type="evidence" value="ECO:0007669"/>
    <property type="project" value="UniProtKB-UniRule"/>
</dbReference>
<dbReference type="CDD" id="cd01173">
    <property type="entry name" value="pyridoxal_pyridoxamine_kinase"/>
    <property type="match status" value="1"/>
</dbReference>
<dbReference type="Gene3D" id="3.40.1190.20">
    <property type="match status" value="1"/>
</dbReference>
<dbReference type="HAMAP" id="MF_01638">
    <property type="entry name" value="PdxK"/>
    <property type="match status" value="1"/>
</dbReference>
<dbReference type="InterPro" id="IPR023479">
    <property type="entry name" value="PdxK"/>
</dbReference>
<dbReference type="InterPro" id="IPR013749">
    <property type="entry name" value="PM/HMP-P_kinase-1"/>
</dbReference>
<dbReference type="InterPro" id="IPR004625">
    <property type="entry name" value="PyrdxlKinase"/>
</dbReference>
<dbReference type="InterPro" id="IPR029056">
    <property type="entry name" value="Ribokinase-like"/>
</dbReference>
<dbReference type="NCBIfam" id="NF006034">
    <property type="entry name" value="PRK08176.1"/>
    <property type="match status" value="1"/>
</dbReference>
<dbReference type="PANTHER" id="PTHR10534">
    <property type="entry name" value="PYRIDOXAL KINASE"/>
    <property type="match status" value="1"/>
</dbReference>
<dbReference type="PANTHER" id="PTHR10534:SF15">
    <property type="entry name" value="PYRIDOXINE_PYRIDOXAL_PYRIDOXAMINE KINASE"/>
    <property type="match status" value="1"/>
</dbReference>
<dbReference type="Pfam" id="PF08543">
    <property type="entry name" value="Phos_pyr_kin"/>
    <property type="match status" value="1"/>
</dbReference>
<dbReference type="SUPFAM" id="SSF53613">
    <property type="entry name" value="Ribokinase-like"/>
    <property type="match status" value="1"/>
</dbReference>
<proteinExistence type="inferred from homology"/>
<comment type="function">
    <text evidence="1">B6-vitamer kinase involved in the salvage pathway of pyridoxal 5'-phosphate (PLP). Catalyzes the phosphorylation of pyridoxine (PN), pyridoxal (PL), and pyridoxamine (PM), forming their respective 5'-phosphorylated esters, i.e. PNP, PLP and PMP.</text>
</comment>
<comment type="catalytic activity">
    <reaction evidence="1">
        <text>pyridoxal + ATP = pyridoxal 5'-phosphate + ADP + H(+)</text>
        <dbReference type="Rhea" id="RHEA:10224"/>
        <dbReference type="ChEBI" id="CHEBI:15378"/>
        <dbReference type="ChEBI" id="CHEBI:17310"/>
        <dbReference type="ChEBI" id="CHEBI:30616"/>
        <dbReference type="ChEBI" id="CHEBI:456216"/>
        <dbReference type="ChEBI" id="CHEBI:597326"/>
        <dbReference type="EC" id="2.7.1.35"/>
    </reaction>
</comment>
<comment type="catalytic activity">
    <reaction evidence="1">
        <text>pyridoxine + ATP = pyridoxine 5'-phosphate + ADP + H(+)</text>
        <dbReference type="Rhea" id="RHEA:25108"/>
        <dbReference type="ChEBI" id="CHEBI:15378"/>
        <dbReference type="ChEBI" id="CHEBI:16709"/>
        <dbReference type="ChEBI" id="CHEBI:30616"/>
        <dbReference type="ChEBI" id="CHEBI:58589"/>
        <dbReference type="ChEBI" id="CHEBI:456216"/>
        <dbReference type="EC" id="2.7.1.35"/>
    </reaction>
</comment>
<comment type="catalytic activity">
    <reaction evidence="1">
        <text>pyridoxamine + ATP = pyridoxamine 5'-phosphate + ADP + H(+)</text>
        <dbReference type="Rhea" id="RHEA:25104"/>
        <dbReference type="ChEBI" id="CHEBI:15378"/>
        <dbReference type="ChEBI" id="CHEBI:30616"/>
        <dbReference type="ChEBI" id="CHEBI:57761"/>
        <dbReference type="ChEBI" id="CHEBI:58451"/>
        <dbReference type="ChEBI" id="CHEBI:456216"/>
        <dbReference type="EC" id="2.7.1.35"/>
    </reaction>
</comment>
<comment type="cofactor">
    <cofactor evidence="1">
        <name>Mg(2+)</name>
        <dbReference type="ChEBI" id="CHEBI:18420"/>
    </cofactor>
</comment>
<comment type="pathway">
    <text evidence="1">Cofactor metabolism; pyridoxal 5'-phosphate salvage; pyridoxal 5'-phosphate from pyridoxal: step 1/1.</text>
</comment>
<comment type="pathway">
    <text evidence="1">Cofactor metabolism; pyridoxal 5'-phosphate salvage; pyridoxine 5'-phosphate from pyridoxine: step 1/1.</text>
</comment>
<comment type="pathway">
    <text evidence="1">Cofactor metabolism; pyridoxal 5'-phosphate salvage; pyridoxamine 5'-phosphate from pyridoxamine: step 1/1.</text>
</comment>
<comment type="subunit">
    <text evidence="1">Homodimer.</text>
</comment>
<comment type="similarity">
    <text evidence="1">Belongs to the pyridoxine kinase family. PdxK subfamily.</text>
</comment>
<comment type="sequence caution" evidence="2">
    <conflict type="erroneous initiation">
        <sequence resource="EMBL-CDS" id="CAE41615"/>
    </conflict>
</comment>
<feature type="chain" id="PRO_0000268834" description="Pyridoxine/pyridoxal/pyridoxamine kinase">
    <location>
        <begin position="1"/>
        <end position="283"/>
    </location>
</feature>
<feature type="binding site" evidence="1">
    <location>
        <position position="23"/>
    </location>
    <ligand>
        <name>substrate</name>
    </ligand>
</feature>
<feature type="binding site" evidence="1">
    <location>
        <position position="59"/>
    </location>
    <ligand>
        <name>substrate</name>
    </ligand>
</feature>
<feature type="binding site" evidence="1">
    <location>
        <position position="125"/>
    </location>
    <ligand>
        <name>ATP</name>
        <dbReference type="ChEBI" id="CHEBI:30616"/>
    </ligand>
</feature>
<feature type="binding site" evidence="1">
    <location>
        <position position="136"/>
    </location>
    <ligand>
        <name>Mg(2+)</name>
        <dbReference type="ChEBI" id="CHEBI:18420"/>
    </ligand>
</feature>
<feature type="binding site" evidence="1">
    <location>
        <position position="157"/>
    </location>
    <ligand>
        <name>ATP</name>
        <dbReference type="ChEBI" id="CHEBI:30616"/>
    </ligand>
</feature>
<feature type="binding site" evidence="1">
    <location>
        <position position="162"/>
    </location>
    <ligand>
        <name>ATP</name>
        <dbReference type="ChEBI" id="CHEBI:30616"/>
    </ligand>
</feature>
<feature type="binding site" evidence="1">
    <location>
        <position position="162"/>
    </location>
    <ligand>
        <name>Mg(2+)</name>
        <dbReference type="ChEBI" id="CHEBI:18420"/>
    </ligand>
</feature>
<feature type="binding site" evidence="1">
    <location>
        <position position="195"/>
    </location>
    <ligand>
        <name>ATP</name>
        <dbReference type="ChEBI" id="CHEBI:30616"/>
    </ligand>
</feature>
<feature type="binding site" evidence="1">
    <location>
        <begin position="222"/>
        <end position="225"/>
    </location>
    <ligand>
        <name>ATP</name>
        <dbReference type="ChEBI" id="CHEBI:30616"/>
    </ligand>
</feature>
<feature type="binding site" evidence="1">
    <location>
        <position position="232"/>
    </location>
    <ligand>
        <name>ATP</name>
        <dbReference type="ChEBI" id="CHEBI:30616"/>
    </ligand>
</feature>
<feature type="binding site" evidence="1">
    <location>
        <position position="234"/>
    </location>
    <ligand>
        <name>substrate</name>
    </ligand>
</feature>
<name>PDXK_BORPE</name>